<gene>
    <name evidence="1" type="primary">thiC</name>
    <name type="ordered locus">Mpe_A1610</name>
</gene>
<accession>A2SG83</accession>
<reference key="1">
    <citation type="journal article" date="2007" name="J. Bacteriol.">
        <title>Whole-genome analysis of the methyl tert-butyl ether-degrading beta-proteobacterium Methylibium petroleiphilum PM1.</title>
        <authorList>
            <person name="Kane S.R."/>
            <person name="Chakicherla A.Y."/>
            <person name="Chain P.S.G."/>
            <person name="Schmidt R."/>
            <person name="Shin M.W."/>
            <person name="Legler T.C."/>
            <person name="Scow K.M."/>
            <person name="Larimer F.W."/>
            <person name="Lucas S.M."/>
            <person name="Richardson P.M."/>
            <person name="Hristova K.R."/>
        </authorList>
    </citation>
    <scope>NUCLEOTIDE SEQUENCE [LARGE SCALE GENOMIC DNA]</scope>
    <source>
        <strain>ATCC BAA-1232 / LMG 22953 / PM1</strain>
    </source>
</reference>
<protein>
    <recommendedName>
        <fullName evidence="1">Phosphomethylpyrimidine synthase</fullName>
        <ecNumber evidence="1">4.1.99.17</ecNumber>
    </recommendedName>
    <alternativeName>
        <fullName evidence="1">Hydroxymethylpyrimidine phosphate synthase</fullName>
        <shortName evidence="1">HMP-P synthase</shortName>
        <shortName evidence="1">HMP-phosphate synthase</shortName>
        <shortName evidence="1">HMPP synthase</shortName>
    </alternativeName>
    <alternativeName>
        <fullName evidence="1">Thiamine biosynthesis protein ThiC</fullName>
    </alternativeName>
</protein>
<keyword id="KW-0004">4Fe-4S</keyword>
<keyword id="KW-0408">Iron</keyword>
<keyword id="KW-0411">Iron-sulfur</keyword>
<keyword id="KW-0456">Lyase</keyword>
<keyword id="KW-0479">Metal-binding</keyword>
<keyword id="KW-1185">Reference proteome</keyword>
<keyword id="KW-0949">S-adenosyl-L-methionine</keyword>
<keyword id="KW-0784">Thiamine biosynthesis</keyword>
<keyword id="KW-0862">Zinc</keyword>
<organism>
    <name type="scientific">Methylibium petroleiphilum (strain ATCC BAA-1232 / LMG 22953 / PM1)</name>
    <dbReference type="NCBI Taxonomy" id="420662"/>
    <lineage>
        <taxon>Bacteria</taxon>
        <taxon>Pseudomonadati</taxon>
        <taxon>Pseudomonadota</taxon>
        <taxon>Betaproteobacteria</taxon>
        <taxon>Burkholderiales</taxon>
        <taxon>Sphaerotilaceae</taxon>
        <taxon>Methylibium</taxon>
    </lineage>
</organism>
<feature type="chain" id="PRO_1000004774" description="Phosphomethylpyrimidine synthase">
    <location>
        <begin position="1"/>
        <end position="628"/>
    </location>
</feature>
<feature type="binding site" evidence="1">
    <location>
        <position position="228"/>
    </location>
    <ligand>
        <name>substrate</name>
    </ligand>
</feature>
<feature type="binding site" evidence="1">
    <location>
        <position position="257"/>
    </location>
    <ligand>
        <name>substrate</name>
    </ligand>
</feature>
<feature type="binding site" evidence="1">
    <location>
        <position position="286"/>
    </location>
    <ligand>
        <name>substrate</name>
    </ligand>
</feature>
<feature type="binding site" evidence="1">
    <location>
        <position position="322"/>
    </location>
    <ligand>
        <name>substrate</name>
    </ligand>
</feature>
<feature type="binding site" evidence="1">
    <location>
        <begin position="342"/>
        <end position="344"/>
    </location>
    <ligand>
        <name>substrate</name>
    </ligand>
</feature>
<feature type="binding site" evidence="1">
    <location>
        <begin position="383"/>
        <end position="386"/>
    </location>
    <ligand>
        <name>substrate</name>
    </ligand>
</feature>
<feature type="binding site" evidence="1">
    <location>
        <position position="422"/>
    </location>
    <ligand>
        <name>substrate</name>
    </ligand>
</feature>
<feature type="binding site" evidence="1">
    <location>
        <position position="426"/>
    </location>
    <ligand>
        <name>Zn(2+)</name>
        <dbReference type="ChEBI" id="CHEBI:29105"/>
    </ligand>
</feature>
<feature type="binding site" evidence="1">
    <location>
        <position position="449"/>
    </location>
    <ligand>
        <name>substrate</name>
    </ligand>
</feature>
<feature type="binding site" evidence="1">
    <location>
        <position position="490"/>
    </location>
    <ligand>
        <name>Zn(2+)</name>
        <dbReference type="ChEBI" id="CHEBI:29105"/>
    </ligand>
</feature>
<feature type="binding site" evidence="1">
    <location>
        <position position="570"/>
    </location>
    <ligand>
        <name>[4Fe-4S] cluster</name>
        <dbReference type="ChEBI" id="CHEBI:49883"/>
        <note>4Fe-4S-S-AdoMet</note>
    </ligand>
</feature>
<feature type="binding site" evidence="1">
    <location>
        <position position="573"/>
    </location>
    <ligand>
        <name>[4Fe-4S] cluster</name>
        <dbReference type="ChEBI" id="CHEBI:49883"/>
        <note>4Fe-4S-S-AdoMet</note>
    </ligand>
</feature>
<feature type="binding site" evidence="1">
    <location>
        <position position="578"/>
    </location>
    <ligand>
        <name>[4Fe-4S] cluster</name>
        <dbReference type="ChEBI" id="CHEBI:49883"/>
        <note>4Fe-4S-S-AdoMet</note>
    </ligand>
</feature>
<proteinExistence type="inferred from homology"/>
<dbReference type="EC" id="4.1.99.17" evidence="1"/>
<dbReference type="EMBL" id="CP000555">
    <property type="protein sequence ID" value="ABM94572.1"/>
    <property type="molecule type" value="Genomic_DNA"/>
</dbReference>
<dbReference type="RefSeq" id="WP_011829209.1">
    <property type="nucleotide sequence ID" value="NC_008825.1"/>
</dbReference>
<dbReference type="SMR" id="A2SG83"/>
<dbReference type="STRING" id="420662.Mpe_A1610"/>
<dbReference type="KEGG" id="mpt:Mpe_A1610"/>
<dbReference type="eggNOG" id="COG0422">
    <property type="taxonomic scope" value="Bacteria"/>
</dbReference>
<dbReference type="HOGENOM" id="CLU_013181_2_1_4"/>
<dbReference type="UniPathway" id="UPA00060"/>
<dbReference type="Proteomes" id="UP000000366">
    <property type="component" value="Chromosome"/>
</dbReference>
<dbReference type="GO" id="GO:0005829">
    <property type="term" value="C:cytosol"/>
    <property type="evidence" value="ECO:0007669"/>
    <property type="project" value="TreeGrafter"/>
</dbReference>
<dbReference type="GO" id="GO:0051539">
    <property type="term" value="F:4 iron, 4 sulfur cluster binding"/>
    <property type="evidence" value="ECO:0007669"/>
    <property type="project" value="UniProtKB-KW"/>
</dbReference>
<dbReference type="GO" id="GO:0016830">
    <property type="term" value="F:carbon-carbon lyase activity"/>
    <property type="evidence" value="ECO:0007669"/>
    <property type="project" value="InterPro"/>
</dbReference>
<dbReference type="GO" id="GO:0008270">
    <property type="term" value="F:zinc ion binding"/>
    <property type="evidence" value="ECO:0007669"/>
    <property type="project" value="UniProtKB-UniRule"/>
</dbReference>
<dbReference type="GO" id="GO:0009228">
    <property type="term" value="P:thiamine biosynthetic process"/>
    <property type="evidence" value="ECO:0007669"/>
    <property type="project" value="UniProtKB-KW"/>
</dbReference>
<dbReference type="GO" id="GO:0009229">
    <property type="term" value="P:thiamine diphosphate biosynthetic process"/>
    <property type="evidence" value="ECO:0007669"/>
    <property type="project" value="UniProtKB-UniRule"/>
</dbReference>
<dbReference type="FunFam" id="3.20.20.540:FF:000001">
    <property type="entry name" value="Phosphomethylpyrimidine synthase"/>
    <property type="match status" value="1"/>
</dbReference>
<dbReference type="Gene3D" id="6.10.250.620">
    <property type="match status" value="1"/>
</dbReference>
<dbReference type="Gene3D" id="3.20.20.540">
    <property type="entry name" value="Radical SAM ThiC family, central domain"/>
    <property type="match status" value="1"/>
</dbReference>
<dbReference type="HAMAP" id="MF_00089">
    <property type="entry name" value="ThiC"/>
    <property type="match status" value="1"/>
</dbReference>
<dbReference type="InterPro" id="IPR037509">
    <property type="entry name" value="ThiC"/>
</dbReference>
<dbReference type="InterPro" id="IPR025747">
    <property type="entry name" value="ThiC-associated_dom"/>
</dbReference>
<dbReference type="InterPro" id="IPR038521">
    <property type="entry name" value="ThiC/Bza_core_dom"/>
</dbReference>
<dbReference type="InterPro" id="IPR002817">
    <property type="entry name" value="ThiC/BzaA/B"/>
</dbReference>
<dbReference type="NCBIfam" id="NF006763">
    <property type="entry name" value="PRK09284.1"/>
    <property type="match status" value="1"/>
</dbReference>
<dbReference type="NCBIfam" id="NF009895">
    <property type="entry name" value="PRK13352.1"/>
    <property type="match status" value="1"/>
</dbReference>
<dbReference type="NCBIfam" id="TIGR00190">
    <property type="entry name" value="thiC"/>
    <property type="match status" value="1"/>
</dbReference>
<dbReference type="PANTHER" id="PTHR30557:SF1">
    <property type="entry name" value="PHOSPHOMETHYLPYRIMIDINE SYNTHASE, CHLOROPLASTIC"/>
    <property type="match status" value="1"/>
</dbReference>
<dbReference type="PANTHER" id="PTHR30557">
    <property type="entry name" value="THIAMINE BIOSYNTHESIS PROTEIN THIC"/>
    <property type="match status" value="1"/>
</dbReference>
<dbReference type="Pfam" id="PF13667">
    <property type="entry name" value="ThiC-associated"/>
    <property type="match status" value="1"/>
</dbReference>
<dbReference type="Pfam" id="PF01964">
    <property type="entry name" value="ThiC_Rad_SAM"/>
    <property type="match status" value="1"/>
</dbReference>
<dbReference type="SFLD" id="SFLDF00407">
    <property type="entry name" value="phosphomethylpyrimidine_syntha"/>
    <property type="match status" value="1"/>
</dbReference>
<dbReference type="SFLD" id="SFLDG01114">
    <property type="entry name" value="phosphomethylpyrimidine_syntha"/>
    <property type="match status" value="1"/>
</dbReference>
<dbReference type="SFLD" id="SFLDS00113">
    <property type="entry name" value="Radical_SAM_Phosphomethylpyrim"/>
    <property type="match status" value="1"/>
</dbReference>
<name>THIC_METPP</name>
<sequence length="628" mass="69812">MNAPDKLATLLSLTREPFPASRKSYLQGSRSDLRVPMREVTLTNGETVSLYDTSGPYTEPGVAIDVRRGLPSVRTPWLDERADTEVYAGRLHQALDDGAKHEDREAERIEQLRLDAAALQRPPRRARAGANVTQMHYARRGIVTPEMEYVALRENGKREWMREYLGDAPREQRLRGNPMGAQIPAIVTPEFVRDEVARGRAIIPANINHPEVEPMAIGRNFLVKINANIGNSAVTSSIEEEVEKLVWAIRWGADNVMDLSTGRNIHTTRDWILRNSPVPIGTVPIYQALEKVGGVAEDLTWAIFRDTLIEQAEQGVDYFTIHAGVRLPFIHLTADRRTGIVSRGGSIMAKWCISHHRESFIYEHFEDICDIMKAYDVSFSLGDGLRPGSAADANDEAQFAELRTLGELTQVAWKHDVQTMIEGPGHVPMHMIQANMDEQLKHCHEAPFYTLGPLTIDIAPGYDHIASAIGAAMIGWFGTAMLCYVTPKEHLGLPDREDVKQGIVAYKIAAHAADVAKGHPGARARDDALSKARFEFRWMDQFNLSLDPDTARDFHDETLPKDASKVAHFCSMCGPKFCSMKITQEVRDYAAQRGVSEAQALGAGMAEKSSQFRQAGGEIYIPLAVDKG</sequence>
<comment type="function">
    <text evidence="1">Catalyzes the synthesis of the hydroxymethylpyrimidine phosphate (HMP-P) moiety of thiamine from aminoimidazole ribotide (AIR) in a radical S-adenosyl-L-methionine (SAM)-dependent reaction.</text>
</comment>
<comment type="catalytic activity">
    <reaction evidence="1">
        <text>5-amino-1-(5-phospho-beta-D-ribosyl)imidazole + S-adenosyl-L-methionine = 4-amino-2-methyl-5-(phosphooxymethyl)pyrimidine + CO + 5'-deoxyadenosine + formate + L-methionine + 3 H(+)</text>
        <dbReference type="Rhea" id="RHEA:24840"/>
        <dbReference type="ChEBI" id="CHEBI:15378"/>
        <dbReference type="ChEBI" id="CHEBI:15740"/>
        <dbReference type="ChEBI" id="CHEBI:17245"/>
        <dbReference type="ChEBI" id="CHEBI:17319"/>
        <dbReference type="ChEBI" id="CHEBI:57844"/>
        <dbReference type="ChEBI" id="CHEBI:58354"/>
        <dbReference type="ChEBI" id="CHEBI:59789"/>
        <dbReference type="ChEBI" id="CHEBI:137981"/>
        <dbReference type="EC" id="4.1.99.17"/>
    </reaction>
</comment>
<comment type="cofactor">
    <cofactor evidence="1">
        <name>[4Fe-4S] cluster</name>
        <dbReference type="ChEBI" id="CHEBI:49883"/>
    </cofactor>
    <text evidence="1">Binds 1 [4Fe-4S] cluster per subunit. The cluster is coordinated with 3 cysteines and an exchangeable S-adenosyl-L-methionine.</text>
</comment>
<comment type="pathway">
    <text evidence="1">Cofactor biosynthesis; thiamine diphosphate biosynthesis.</text>
</comment>
<comment type="subunit">
    <text evidence="1">Homodimer.</text>
</comment>
<comment type="similarity">
    <text evidence="1">Belongs to the ThiC family.</text>
</comment>
<evidence type="ECO:0000255" key="1">
    <source>
        <dbReference type="HAMAP-Rule" id="MF_00089"/>
    </source>
</evidence>